<proteinExistence type="inferred from homology"/>
<organism>
    <name type="scientific">Chlorokybus atmophyticus</name>
    <name type="common">Soil alga</name>
    <dbReference type="NCBI Taxonomy" id="3144"/>
    <lineage>
        <taxon>Eukaryota</taxon>
        <taxon>Viridiplantae</taxon>
        <taxon>Streptophyta</taxon>
        <taxon>Chlorokybophyceae</taxon>
        <taxon>Chlorokybales</taxon>
        <taxon>Chlorokybaceae</taxon>
        <taxon>Chlorokybus</taxon>
    </lineage>
</organism>
<reference key="1">
    <citation type="journal article" date="2007" name="BMC Biol.">
        <title>A clade uniting the green algae Mesostigma viride and Chlorokybus atmophyticus represents the deepest branch of the Streptophyta in chloroplast genome-based phylogenies.</title>
        <authorList>
            <person name="Lemieux C."/>
            <person name="Otis C."/>
            <person name="Turmel M."/>
        </authorList>
    </citation>
    <scope>NUCLEOTIDE SEQUENCE [LARGE SCALE GENOMIC DNA]</scope>
    <source>
        <strain>SAG 48.80</strain>
    </source>
</reference>
<keyword id="KW-0150">Chloroplast</keyword>
<keyword id="KW-0934">Plastid</keyword>
<keyword id="KW-0687">Ribonucleoprotein</keyword>
<keyword id="KW-0689">Ribosomal protein</keyword>
<keyword id="KW-0694">RNA-binding</keyword>
<keyword id="KW-0699">rRNA-binding</keyword>
<feature type="chain" id="PRO_0000293422" description="Small ribosomal subunit protein uS4c">
    <location>
        <begin position="1"/>
        <end position="203"/>
    </location>
</feature>
<feature type="domain" description="S4 RNA-binding">
    <location>
        <begin position="92"/>
        <end position="150"/>
    </location>
</feature>
<sequence>MSRYRGPRLKIVRRLGDLPGFTNKIQKRQASTQNKGKKTAKKRLSQYSIRLQEKQKLRYNYGVTERQLLLYVRKARRIKGSTGQILLQQLEMRLDNIIYRLGMAPTIANARQLVNHGHIVVNDRIVTIPSYRCKPKDIISVRNNSTSRNVITNNLSFSDSRLPPHLSFKKESLVALVNGLVDRQWIPLNINELLVVEYYSRMA</sequence>
<comment type="function">
    <text evidence="1">One of the primary rRNA binding proteins, it binds directly to 16S rRNA where it nucleates assembly of the body of the 30S subunit.</text>
</comment>
<comment type="function">
    <text evidence="1">With S5 and S12 plays an important role in translational accuracy.</text>
</comment>
<comment type="subunit">
    <text evidence="1">Part of the 30S ribosomal subunit. Contacts protein S5. The interaction surface between S4 and S5 is involved in control of translational fidelity (By similarity).</text>
</comment>
<comment type="subcellular location">
    <subcellularLocation>
        <location>Plastid</location>
        <location>Chloroplast</location>
    </subcellularLocation>
</comment>
<comment type="similarity">
    <text evidence="2">Belongs to the universal ribosomal protein uS4 family.</text>
</comment>
<evidence type="ECO:0000250" key="1"/>
<evidence type="ECO:0000305" key="2"/>
<protein>
    <recommendedName>
        <fullName evidence="2">Small ribosomal subunit protein uS4c</fullName>
    </recommendedName>
    <alternativeName>
        <fullName>30S ribosomal protein S4, chloroplastic</fullName>
    </alternativeName>
</protein>
<geneLocation type="chloroplast"/>
<name>RR4_CHLAT</name>
<dbReference type="EMBL" id="DQ422812">
    <property type="protein sequence ID" value="ABD62252.2"/>
    <property type="molecule type" value="Genomic_DNA"/>
</dbReference>
<dbReference type="RefSeq" id="YP_001019095.1">
    <property type="nucleotide sequence ID" value="NC_008822.1"/>
</dbReference>
<dbReference type="SMR" id="Q19VA6"/>
<dbReference type="GeneID" id="4783305"/>
<dbReference type="GO" id="GO:0009507">
    <property type="term" value="C:chloroplast"/>
    <property type="evidence" value="ECO:0007669"/>
    <property type="project" value="UniProtKB-SubCell"/>
</dbReference>
<dbReference type="GO" id="GO:0015935">
    <property type="term" value="C:small ribosomal subunit"/>
    <property type="evidence" value="ECO:0007669"/>
    <property type="project" value="InterPro"/>
</dbReference>
<dbReference type="GO" id="GO:0019843">
    <property type="term" value="F:rRNA binding"/>
    <property type="evidence" value="ECO:0007669"/>
    <property type="project" value="UniProtKB-UniRule"/>
</dbReference>
<dbReference type="GO" id="GO:0003735">
    <property type="term" value="F:structural constituent of ribosome"/>
    <property type="evidence" value="ECO:0007669"/>
    <property type="project" value="InterPro"/>
</dbReference>
<dbReference type="GO" id="GO:0042274">
    <property type="term" value="P:ribosomal small subunit biogenesis"/>
    <property type="evidence" value="ECO:0007669"/>
    <property type="project" value="TreeGrafter"/>
</dbReference>
<dbReference type="GO" id="GO:0006412">
    <property type="term" value="P:translation"/>
    <property type="evidence" value="ECO:0007669"/>
    <property type="project" value="UniProtKB-UniRule"/>
</dbReference>
<dbReference type="CDD" id="cd00165">
    <property type="entry name" value="S4"/>
    <property type="match status" value="1"/>
</dbReference>
<dbReference type="FunFam" id="3.10.290.10:FF:000001">
    <property type="entry name" value="30S ribosomal protein S4"/>
    <property type="match status" value="1"/>
</dbReference>
<dbReference type="FunFam" id="1.10.1050.10:FF:000002">
    <property type="entry name" value="30S ribosomal protein S4, chloroplastic"/>
    <property type="match status" value="1"/>
</dbReference>
<dbReference type="Gene3D" id="1.10.1050.10">
    <property type="entry name" value="Ribosomal Protein S4 Delta 41, Chain A, domain 1"/>
    <property type="match status" value="1"/>
</dbReference>
<dbReference type="Gene3D" id="3.10.290.10">
    <property type="entry name" value="RNA-binding S4 domain"/>
    <property type="match status" value="1"/>
</dbReference>
<dbReference type="HAMAP" id="MF_01306_B">
    <property type="entry name" value="Ribosomal_uS4_B"/>
    <property type="match status" value="1"/>
</dbReference>
<dbReference type="InterPro" id="IPR022801">
    <property type="entry name" value="Ribosomal_uS4"/>
</dbReference>
<dbReference type="InterPro" id="IPR005709">
    <property type="entry name" value="Ribosomal_uS4_bac-type"/>
</dbReference>
<dbReference type="InterPro" id="IPR018079">
    <property type="entry name" value="Ribosomal_uS4_CS"/>
</dbReference>
<dbReference type="InterPro" id="IPR001912">
    <property type="entry name" value="Ribosomal_uS4_N"/>
</dbReference>
<dbReference type="InterPro" id="IPR002942">
    <property type="entry name" value="S4_RNA-bd"/>
</dbReference>
<dbReference type="InterPro" id="IPR036986">
    <property type="entry name" value="S4_RNA-bd_sf"/>
</dbReference>
<dbReference type="NCBIfam" id="NF003717">
    <property type="entry name" value="PRK05327.1"/>
    <property type="match status" value="1"/>
</dbReference>
<dbReference type="NCBIfam" id="TIGR01017">
    <property type="entry name" value="rpsD_bact"/>
    <property type="match status" value="1"/>
</dbReference>
<dbReference type="PANTHER" id="PTHR11831">
    <property type="entry name" value="30S 40S RIBOSOMAL PROTEIN"/>
    <property type="match status" value="1"/>
</dbReference>
<dbReference type="PANTHER" id="PTHR11831:SF4">
    <property type="entry name" value="SMALL RIBOSOMAL SUBUNIT PROTEIN US4M"/>
    <property type="match status" value="1"/>
</dbReference>
<dbReference type="Pfam" id="PF00163">
    <property type="entry name" value="Ribosomal_S4"/>
    <property type="match status" value="1"/>
</dbReference>
<dbReference type="Pfam" id="PF01479">
    <property type="entry name" value="S4"/>
    <property type="match status" value="1"/>
</dbReference>
<dbReference type="SMART" id="SM01390">
    <property type="entry name" value="Ribosomal_S4"/>
    <property type="match status" value="1"/>
</dbReference>
<dbReference type="SMART" id="SM00363">
    <property type="entry name" value="S4"/>
    <property type="match status" value="1"/>
</dbReference>
<dbReference type="SUPFAM" id="SSF55174">
    <property type="entry name" value="Alpha-L RNA-binding motif"/>
    <property type="match status" value="1"/>
</dbReference>
<dbReference type="PROSITE" id="PS00632">
    <property type="entry name" value="RIBOSOMAL_S4"/>
    <property type="match status" value="1"/>
</dbReference>
<dbReference type="PROSITE" id="PS50889">
    <property type="entry name" value="S4"/>
    <property type="match status" value="1"/>
</dbReference>
<accession>Q19VA6</accession>
<gene>
    <name type="primary">rps4</name>
</gene>